<accession>Q5LNJ2</accession>
<name>RNH_RUEPO</name>
<evidence type="ECO:0000255" key="1">
    <source>
        <dbReference type="HAMAP-Rule" id="MF_00042"/>
    </source>
</evidence>
<evidence type="ECO:0000255" key="2">
    <source>
        <dbReference type="PROSITE-ProRule" id="PRU00408"/>
    </source>
</evidence>
<reference key="1">
    <citation type="journal article" date="2004" name="Nature">
        <title>Genome sequence of Silicibacter pomeroyi reveals adaptations to the marine environment.</title>
        <authorList>
            <person name="Moran M.A."/>
            <person name="Buchan A."/>
            <person name="Gonzalez J.M."/>
            <person name="Heidelberg J.F."/>
            <person name="Whitman W.B."/>
            <person name="Kiene R.P."/>
            <person name="Henriksen J.R."/>
            <person name="King G.M."/>
            <person name="Belas R."/>
            <person name="Fuqua C."/>
            <person name="Brinkac L.M."/>
            <person name="Lewis M."/>
            <person name="Johri S."/>
            <person name="Weaver B."/>
            <person name="Pai G."/>
            <person name="Eisen J.A."/>
            <person name="Rahe E."/>
            <person name="Sheldon W.M."/>
            <person name="Ye W."/>
            <person name="Miller T.R."/>
            <person name="Carlton J."/>
            <person name="Rasko D.A."/>
            <person name="Paulsen I.T."/>
            <person name="Ren Q."/>
            <person name="Daugherty S.C."/>
            <person name="DeBoy R.T."/>
            <person name="Dodson R.J."/>
            <person name="Durkin A.S."/>
            <person name="Madupu R."/>
            <person name="Nelson W.C."/>
            <person name="Sullivan S.A."/>
            <person name="Rosovitz M.J."/>
            <person name="Haft D.H."/>
            <person name="Selengut J."/>
            <person name="Ward N."/>
        </authorList>
    </citation>
    <scope>NUCLEOTIDE SEQUENCE [LARGE SCALE GENOMIC DNA]</scope>
    <source>
        <strain>ATCC 700808 / DSM 15171 / DSS-3</strain>
    </source>
</reference>
<reference key="2">
    <citation type="journal article" date="2014" name="Stand. Genomic Sci.">
        <title>An updated genome annotation for the model marine bacterium Ruegeria pomeroyi DSS-3.</title>
        <authorList>
            <person name="Rivers A.R."/>
            <person name="Smith C.B."/>
            <person name="Moran M.A."/>
        </authorList>
    </citation>
    <scope>GENOME REANNOTATION</scope>
    <source>
        <strain>ATCC 700808 / DSM 15171 / DSS-3</strain>
    </source>
</reference>
<gene>
    <name evidence="1" type="primary">rnhA</name>
    <name type="ordered locus">SPO3212</name>
</gene>
<protein>
    <recommendedName>
        <fullName evidence="1">Ribonuclease H</fullName>
        <shortName evidence="1">RNase H</shortName>
        <ecNumber evidence="1">3.1.26.4</ecNumber>
    </recommendedName>
</protein>
<organism>
    <name type="scientific">Ruegeria pomeroyi (strain ATCC 700808 / DSM 15171 / DSS-3)</name>
    <name type="common">Silicibacter pomeroyi</name>
    <dbReference type="NCBI Taxonomy" id="246200"/>
    <lineage>
        <taxon>Bacteria</taxon>
        <taxon>Pseudomonadati</taxon>
        <taxon>Pseudomonadota</taxon>
        <taxon>Alphaproteobacteria</taxon>
        <taxon>Rhodobacterales</taxon>
        <taxon>Roseobacteraceae</taxon>
        <taxon>Ruegeria</taxon>
    </lineage>
</organism>
<dbReference type="EC" id="3.1.26.4" evidence="1"/>
<dbReference type="EMBL" id="CP000031">
    <property type="protein sequence ID" value="AAV96447.1"/>
    <property type="molecule type" value="Genomic_DNA"/>
</dbReference>
<dbReference type="RefSeq" id="WP_011048902.1">
    <property type="nucleotide sequence ID" value="NC_003911.12"/>
</dbReference>
<dbReference type="SMR" id="Q5LNJ2"/>
<dbReference type="STRING" id="246200.SPO3212"/>
<dbReference type="PaxDb" id="246200-SPO3212"/>
<dbReference type="KEGG" id="sil:SPO3212"/>
<dbReference type="eggNOG" id="COG0328">
    <property type="taxonomic scope" value="Bacteria"/>
</dbReference>
<dbReference type="HOGENOM" id="CLU_030894_6_0_5"/>
<dbReference type="OrthoDB" id="7845843at2"/>
<dbReference type="Proteomes" id="UP000001023">
    <property type="component" value="Chromosome"/>
</dbReference>
<dbReference type="GO" id="GO:0005737">
    <property type="term" value="C:cytoplasm"/>
    <property type="evidence" value="ECO:0007669"/>
    <property type="project" value="UniProtKB-SubCell"/>
</dbReference>
<dbReference type="GO" id="GO:0000287">
    <property type="term" value="F:magnesium ion binding"/>
    <property type="evidence" value="ECO:0007669"/>
    <property type="project" value="UniProtKB-UniRule"/>
</dbReference>
<dbReference type="GO" id="GO:0003676">
    <property type="term" value="F:nucleic acid binding"/>
    <property type="evidence" value="ECO:0007669"/>
    <property type="project" value="InterPro"/>
</dbReference>
<dbReference type="GO" id="GO:0004523">
    <property type="term" value="F:RNA-DNA hybrid ribonuclease activity"/>
    <property type="evidence" value="ECO:0007669"/>
    <property type="project" value="UniProtKB-UniRule"/>
</dbReference>
<dbReference type="GO" id="GO:0043137">
    <property type="term" value="P:DNA replication, removal of RNA primer"/>
    <property type="evidence" value="ECO:0007669"/>
    <property type="project" value="TreeGrafter"/>
</dbReference>
<dbReference type="CDD" id="cd09278">
    <property type="entry name" value="RNase_HI_prokaryote_like"/>
    <property type="match status" value="1"/>
</dbReference>
<dbReference type="FunFam" id="3.30.420.10:FF:000089">
    <property type="entry name" value="Ribonuclease H"/>
    <property type="match status" value="1"/>
</dbReference>
<dbReference type="Gene3D" id="3.30.420.10">
    <property type="entry name" value="Ribonuclease H-like superfamily/Ribonuclease H"/>
    <property type="match status" value="1"/>
</dbReference>
<dbReference type="HAMAP" id="MF_00042">
    <property type="entry name" value="RNase_H"/>
    <property type="match status" value="1"/>
</dbReference>
<dbReference type="InterPro" id="IPR050092">
    <property type="entry name" value="RNase_H"/>
</dbReference>
<dbReference type="InterPro" id="IPR012337">
    <property type="entry name" value="RNaseH-like_sf"/>
</dbReference>
<dbReference type="InterPro" id="IPR002156">
    <property type="entry name" value="RNaseH_domain"/>
</dbReference>
<dbReference type="InterPro" id="IPR036397">
    <property type="entry name" value="RNaseH_sf"/>
</dbReference>
<dbReference type="InterPro" id="IPR022892">
    <property type="entry name" value="RNaseHI"/>
</dbReference>
<dbReference type="NCBIfam" id="NF001236">
    <property type="entry name" value="PRK00203.1"/>
    <property type="match status" value="1"/>
</dbReference>
<dbReference type="PANTHER" id="PTHR10642">
    <property type="entry name" value="RIBONUCLEASE H1"/>
    <property type="match status" value="1"/>
</dbReference>
<dbReference type="PANTHER" id="PTHR10642:SF26">
    <property type="entry name" value="RIBONUCLEASE H1"/>
    <property type="match status" value="1"/>
</dbReference>
<dbReference type="Pfam" id="PF00075">
    <property type="entry name" value="RNase_H"/>
    <property type="match status" value="1"/>
</dbReference>
<dbReference type="SUPFAM" id="SSF53098">
    <property type="entry name" value="Ribonuclease H-like"/>
    <property type="match status" value="1"/>
</dbReference>
<dbReference type="PROSITE" id="PS50879">
    <property type="entry name" value="RNASE_H_1"/>
    <property type="match status" value="1"/>
</dbReference>
<sequence length="155" mass="17152">MPELFAYTDGACSGNPGPGGWGVLLRAIEGETVLKERELCGGEAETTNNRMELLAAINALETLERPSKITVVTDSAYVKNGVTGWIFGWKRNGWKTAGKKPVKNVELWQRLDLAQARHDVTWKWVKGHAGHPENERADELARAGMKPFKPKKARA</sequence>
<keyword id="KW-0963">Cytoplasm</keyword>
<keyword id="KW-0255">Endonuclease</keyword>
<keyword id="KW-0378">Hydrolase</keyword>
<keyword id="KW-0460">Magnesium</keyword>
<keyword id="KW-0479">Metal-binding</keyword>
<keyword id="KW-0540">Nuclease</keyword>
<keyword id="KW-1185">Reference proteome</keyword>
<comment type="function">
    <text evidence="1">Endonuclease that specifically degrades the RNA of RNA-DNA hybrids.</text>
</comment>
<comment type="catalytic activity">
    <reaction evidence="1">
        <text>Endonucleolytic cleavage to 5'-phosphomonoester.</text>
        <dbReference type="EC" id="3.1.26.4"/>
    </reaction>
</comment>
<comment type="cofactor">
    <cofactor evidence="1">
        <name>Mg(2+)</name>
        <dbReference type="ChEBI" id="CHEBI:18420"/>
    </cofactor>
    <text evidence="1">Binds 1 Mg(2+) ion per subunit. May bind a second metal ion at a regulatory site, or after substrate binding.</text>
</comment>
<comment type="subunit">
    <text evidence="1">Monomer.</text>
</comment>
<comment type="subcellular location">
    <subcellularLocation>
        <location evidence="1">Cytoplasm</location>
    </subcellularLocation>
</comment>
<comment type="similarity">
    <text evidence="1">Belongs to the RNase H family.</text>
</comment>
<feature type="chain" id="PRO_0000195405" description="Ribonuclease H">
    <location>
        <begin position="1"/>
        <end position="155"/>
    </location>
</feature>
<feature type="domain" description="RNase H type-1" evidence="2">
    <location>
        <begin position="1"/>
        <end position="146"/>
    </location>
</feature>
<feature type="binding site" evidence="1">
    <location>
        <position position="9"/>
    </location>
    <ligand>
        <name>Mg(2+)</name>
        <dbReference type="ChEBI" id="CHEBI:18420"/>
        <label>1</label>
    </ligand>
</feature>
<feature type="binding site" evidence="1">
    <location>
        <position position="9"/>
    </location>
    <ligand>
        <name>Mg(2+)</name>
        <dbReference type="ChEBI" id="CHEBI:18420"/>
        <label>2</label>
    </ligand>
</feature>
<feature type="binding site" evidence="1">
    <location>
        <position position="52"/>
    </location>
    <ligand>
        <name>Mg(2+)</name>
        <dbReference type="ChEBI" id="CHEBI:18420"/>
        <label>1</label>
    </ligand>
</feature>
<feature type="binding site" evidence="1">
    <location>
        <position position="74"/>
    </location>
    <ligand>
        <name>Mg(2+)</name>
        <dbReference type="ChEBI" id="CHEBI:18420"/>
        <label>1</label>
    </ligand>
</feature>
<feature type="binding site" evidence="1">
    <location>
        <position position="138"/>
    </location>
    <ligand>
        <name>Mg(2+)</name>
        <dbReference type="ChEBI" id="CHEBI:18420"/>
        <label>2</label>
    </ligand>
</feature>
<proteinExistence type="inferred from homology"/>